<keyword id="KW-0204">Cytolysis</keyword>
<keyword id="KW-1030">Host cell inner membrane</keyword>
<keyword id="KW-0578">Host cell lysis by virus</keyword>
<keyword id="KW-1032">Host cell membrane</keyword>
<keyword id="KW-1043">Host membrane</keyword>
<keyword id="KW-0472">Membrane</keyword>
<keyword id="KW-1185">Reference proteome</keyword>
<keyword id="KW-0812">Transmembrane</keyword>
<keyword id="KW-1133">Transmembrane helix</keyword>
<keyword id="KW-1188">Viral release from host cell</keyword>
<organismHost>
    <name type="scientific">Enterobacteriaceae</name>
    <dbReference type="NCBI Taxonomy" id="543"/>
</organismHost>
<gene>
    <name type="primary">Y</name>
</gene>
<evidence type="ECO:0000250" key="1"/>
<evidence type="ECO:0000250" key="2">
    <source>
        <dbReference type="UniProtKB" id="P03705"/>
    </source>
</evidence>
<evidence type="ECO:0000255" key="3"/>
<evidence type="ECO:0000269" key="4">
    <source>
    </source>
</evidence>
<evidence type="ECO:0000305" key="5"/>
<evidence type="ECO:0000305" key="6">
    <source>
    </source>
</evidence>
<accession>P51773</accession>
<sequence length="93" mass="9818">MTAEEKSVLSLFMIGVLIVVGKVLAGGEPITPRLFIGRMLLGGFVSMVAGVVLVQFPDLSLPAVCGIGSMLGIAGYQVIEIAIQRRFKGRGKQ</sequence>
<feature type="chain" id="PRO_0000165241" description="Holin">
    <location>
        <begin position="1"/>
        <end position="93"/>
    </location>
</feature>
<feature type="topological domain" description="Periplasmic" evidence="3">
    <location>
        <begin position="1"/>
        <end position="6"/>
    </location>
</feature>
<feature type="transmembrane region" description="Helical" evidence="3">
    <location>
        <begin position="7"/>
        <end position="27"/>
    </location>
</feature>
<feature type="topological domain" description="Cytoplasmic" evidence="3">
    <location>
        <begin position="28"/>
        <end position="33"/>
    </location>
</feature>
<feature type="transmembrane region" description="Helical" evidence="3">
    <location>
        <begin position="34"/>
        <end position="54"/>
    </location>
</feature>
<feature type="topological domain" description="Periplasmic" evidence="3">
    <location>
        <begin position="55"/>
        <end position="62"/>
    </location>
</feature>
<feature type="transmembrane region" description="Helical" evidence="3">
    <location>
        <begin position="63"/>
        <end position="83"/>
    </location>
</feature>
<feature type="topological domain" description="Cytoplasmic" evidence="3">
    <location>
        <begin position="84"/>
        <end position="93"/>
    </location>
</feature>
<feature type="mutagenesis site" description="Complete loss of lysis function, no effect on accumulation." evidence="4">
    <original>G</original>
    <variation>V</variation>
    <location>
        <position position="50"/>
    </location>
</feature>
<protein>
    <recommendedName>
        <fullName>Holin</fullName>
    </recommendedName>
</protein>
<organism>
    <name type="scientific">Escherichia phage P2</name>
    <name type="common">Bacteriophage P2</name>
    <dbReference type="NCBI Taxonomy" id="2905681"/>
    <lineage>
        <taxon>Viruses</taxon>
        <taxon>Duplodnaviria</taxon>
        <taxon>Heunggongvirae</taxon>
        <taxon>Uroviricota</taxon>
        <taxon>Caudoviricetes</taxon>
        <taxon>Peduoviridae</taxon>
        <taxon>Peduovirus</taxon>
        <taxon>Peduovirus P2</taxon>
    </lineage>
</organism>
<name>HOLIN_BPP2</name>
<reference key="1">
    <citation type="journal article" date="1994" name="J. Bacteriol.">
        <title>Functions involved in bacteriophage P2-induced host cell lysis and identification of a new tail gene.</title>
        <authorList>
            <person name="Ziermann R."/>
            <person name="Bartlett B."/>
            <person name="Calendar R."/>
            <person name="Christie G.E."/>
        </authorList>
    </citation>
    <scope>NUCLEOTIDE SEQUENCE [GENOMIC DNA]</scope>
</reference>
<reference key="2">
    <citation type="journal article" date="2013" name="J. Bacteriol.">
        <title>Functional analysis of a class I holin, P2 Y.</title>
        <authorList>
            <person name="To K.H."/>
            <person name="Dewey J."/>
            <person name="Weaver J."/>
            <person name="Park T."/>
            <person name="Young R."/>
        </authorList>
    </citation>
    <scope>FUNCTION</scope>
    <scope>SUBUNIT</scope>
    <scope>MUTAGENESIS OF GLY-50</scope>
</reference>
<proteinExistence type="evidence at protein level"/>
<dbReference type="EMBL" id="AF063097">
    <property type="protein sequence ID" value="AAD03275.1"/>
    <property type="molecule type" value="Genomic_DNA"/>
</dbReference>
<dbReference type="PIR" id="C55855">
    <property type="entry name" value="C55855"/>
</dbReference>
<dbReference type="RefSeq" id="NP_046764.1">
    <property type="nucleotide sequence ID" value="NC_001895.1"/>
</dbReference>
<dbReference type="TCDB" id="1.E.3.1.1">
    <property type="family name" value="the p2 holin (p2 holin) family"/>
</dbReference>
<dbReference type="GeneID" id="77440795"/>
<dbReference type="KEGG" id="vg:77440795"/>
<dbReference type="Proteomes" id="UP000009092">
    <property type="component" value="Genome"/>
</dbReference>
<dbReference type="GO" id="GO:0020002">
    <property type="term" value="C:host cell plasma membrane"/>
    <property type="evidence" value="ECO:0007669"/>
    <property type="project" value="UniProtKB-SubCell"/>
</dbReference>
<dbReference type="GO" id="GO:0016020">
    <property type="term" value="C:membrane"/>
    <property type="evidence" value="ECO:0007669"/>
    <property type="project" value="UniProtKB-KW"/>
</dbReference>
<dbReference type="GO" id="GO:0140911">
    <property type="term" value="F:pore-forming activity"/>
    <property type="evidence" value="ECO:0000314"/>
    <property type="project" value="CACAO"/>
</dbReference>
<dbReference type="GO" id="GO:0044660">
    <property type="term" value="P:viral release via pore formation in host cell membrane"/>
    <property type="evidence" value="ECO:0007669"/>
    <property type="project" value="InterPro"/>
</dbReference>
<dbReference type="InterPro" id="IPR007633">
    <property type="entry name" value="Phage_P2_Holin"/>
</dbReference>
<dbReference type="Pfam" id="PF04550">
    <property type="entry name" value="Phage_holin_3_2"/>
    <property type="match status" value="1"/>
</dbReference>
<comment type="function">
    <text evidence="6">Accumulates harmlessly in the cytoplasmic membrane until it reaches a critical concentration that triggers the formation of micron-scale pores (holes) causing host cell membrane disruption and endolysin escape into the periplasmic space (Probable). Determines the precise timing of host cell lysis (Probable). Participates with the endolysin and spanin proteins in the sequential events which lead to the programmed host cell lysis releasing the mature viral particles from the host cell (Probable).</text>
</comment>
<comment type="subunit">
    <text evidence="1">Homomultimer. Interacts with antiholin; this interaction blocks the holin homomultimerization and delays host cell lysis (By similarity).</text>
</comment>
<comment type="subcellular location">
    <subcellularLocation>
        <location evidence="2">Host cell inner membrane</location>
        <topology evidence="2">Multi-pass membrane protein</topology>
    </subcellularLocation>
    <text evidence="6">Classified as a class I holin.</text>
</comment>
<comment type="domain">
    <text evidence="1">The C-terminus acts as a cytoplasmic regulatory region.</text>
</comment>
<comment type="similarity">
    <text evidence="5">Belongs to the P2likevirus holin family.</text>
</comment>